<evidence type="ECO:0000255" key="1">
    <source>
        <dbReference type="HAMAP-Rule" id="MF_00249"/>
    </source>
</evidence>
<protein>
    <recommendedName>
        <fullName evidence="1">ATP-dependent protease ATPase subunit HslU</fullName>
    </recommendedName>
    <alternativeName>
        <fullName evidence="1">Unfoldase HslU</fullName>
    </alternativeName>
</protein>
<organism>
    <name type="scientific">Chelativorans sp. (strain BNC1)</name>
    <dbReference type="NCBI Taxonomy" id="266779"/>
    <lineage>
        <taxon>Bacteria</taxon>
        <taxon>Pseudomonadati</taxon>
        <taxon>Pseudomonadota</taxon>
        <taxon>Alphaproteobacteria</taxon>
        <taxon>Hyphomicrobiales</taxon>
        <taxon>Phyllobacteriaceae</taxon>
        <taxon>Chelativorans</taxon>
    </lineage>
</organism>
<gene>
    <name evidence="1" type="primary">hslU</name>
    <name type="ordered locus">Meso_3490</name>
</gene>
<sequence length="436" mass="48139">MSNFSPREIVSELDRYIIGQKEAKRAVAIALRNRWRRQQLEPGLREEVMPKNILMIGPTGVGKTEISRRLAKLAGAPFVKVEATKFTEVGYVGRDVEQIVRDLVEVAIALTREKMREGVEARAHLNAEERVLEALVGRTASPATRDSFRQKLRSGELDDKEIEIQVADAGGGMGSFEIPGMPGANIGVLNINDMLQKAMGGGRTKTVKTTVKDSYKFLINDESDKLLDQDEVVRRALSSAENDGIVFIDEIDKIASREGGMGAGVSREGVQRDLLPLVEGTTVATKYGPVKTDHVLFIASGAFHVAKPSDLLPELQGRLPIRVELRALEKEDFRRILTETEASLIKQYIALMETEGVELEFTEDAIVRLAEVAVDLNASVENIGARRLQTVMERVLDEISYNAPDRSGSKMVIDAAYVDQHVGDLAKNTDLSRFIL</sequence>
<reference key="1">
    <citation type="submission" date="2006-06" db="EMBL/GenBank/DDBJ databases">
        <title>Complete sequence of chromosome of Mesorhizobium sp. BNC1.</title>
        <authorList>
            <consortium name="US DOE Joint Genome Institute"/>
            <person name="Copeland A."/>
            <person name="Lucas S."/>
            <person name="Lapidus A."/>
            <person name="Barry K."/>
            <person name="Detter J.C."/>
            <person name="Glavina del Rio T."/>
            <person name="Hammon N."/>
            <person name="Israni S."/>
            <person name="Dalin E."/>
            <person name="Tice H."/>
            <person name="Pitluck S."/>
            <person name="Chertkov O."/>
            <person name="Brettin T."/>
            <person name="Bruce D."/>
            <person name="Han C."/>
            <person name="Tapia R."/>
            <person name="Gilna P."/>
            <person name="Schmutz J."/>
            <person name="Larimer F."/>
            <person name="Land M."/>
            <person name="Hauser L."/>
            <person name="Kyrpides N."/>
            <person name="Mikhailova N."/>
            <person name="Richardson P."/>
        </authorList>
    </citation>
    <scope>NUCLEOTIDE SEQUENCE [LARGE SCALE GENOMIC DNA]</scope>
    <source>
        <strain>BNC1</strain>
    </source>
</reference>
<proteinExistence type="inferred from homology"/>
<comment type="function">
    <text evidence="1">ATPase subunit of a proteasome-like degradation complex; this subunit has chaperone activity. The binding of ATP and its subsequent hydrolysis by HslU are essential for unfolding of protein substrates subsequently hydrolyzed by HslV. HslU recognizes the N-terminal part of its protein substrates and unfolds these before they are guided to HslV for hydrolysis.</text>
</comment>
<comment type="subunit">
    <text evidence="1">A double ring-shaped homohexamer of HslV is capped on each side by a ring-shaped HslU homohexamer. The assembly of the HslU/HslV complex is dependent on binding of ATP.</text>
</comment>
<comment type="subcellular location">
    <subcellularLocation>
        <location evidence="1">Cytoplasm</location>
    </subcellularLocation>
</comment>
<comment type="similarity">
    <text evidence="1">Belongs to the ClpX chaperone family. HslU subfamily.</text>
</comment>
<keyword id="KW-0067">ATP-binding</keyword>
<keyword id="KW-0143">Chaperone</keyword>
<keyword id="KW-0963">Cytoplasm</keyword>
<keyword id="KW-0547">Nucleotide-binding</keyword>
<keyword id="KW-0346">Stress response</keyword>
<dbReference type="EMBL" id="CP000390">
    <property type="protein sequence ID" value="ABG64861.1"/>
    <property type="molecule type" value="Genomic_DNA"/>
</dbReference>
<dbReference type="SMR" id="Q11CL4"/>
<dbReference type="STRING" id="266779.Meso_3490"/>
<dbReference type="KEGG" id="mes:Meso_3490"/>
<dbReference type="eggNOG" id="COG1220">
    <property type="taxonomic scope" value="Bacteria"/>
</dbReference>
<dbReference type="HOGENOM" id="CLU_033123_0_0_5"/>
<dbReference type="OrthoDB" id="9804062at2"/>
<dbReference type="GO" id="GO:0009376">
    <property type="term" value="C:HslUV protease complex"/>
    <property type="evidence" value="ECO:0007669"/>
    <property type="project" value="UniProtKB-UniRule"/>
</dbReference>
<dbReference type="GO" id="GO:0005524">
    <property type="term" value="F:ATP binding"/>
    <property type="evidence" value="ECO:0007669"/>
    <property type="project" value="UniProtKB-UniRule"/>
</dbReference>
<dbReference type="GO" id="GO:0016887">
    <property type="term" value="F:ATP hydrolysis activity"/>
    <property type="evidence" value="ECO:0007669"/>
    <property type="project" value="InterPro"/>
</dbReference>
<dbReference type="GO" id="GO:0008233">
    <property type="term" value="F:peptidase activity"/>
    <property type="evidence" value="ECO:0007669"/>
    <property type="project" value="InterPro"/>
</dbReference>
<dbReference type="GO" id="GO:0036402">
    <property type="term" value="F:proteasome-activating activity"/>
    <property type="evidence" value="ECO:0007669"/>
    <property type="project" value="UniProtKB-UniRule"/>
</dbReference>
<dbReference type="GO" id="GO:0043335">
    <property type="term" value="P:protein unfolding"/>
    <property type="evidence" value="ECO:0007669"/>
    <property type="project" value="UniProtKB-UniRule"/>
</dbReference>
<dbReference type="GO" id="GO:0051603">
    <property type="term" value="P:proteolysis involved in protein catabolic process"/>
    <property type="evidence" value="ECO:0007669"/>
    <property type="project" value="TreeGrafter"/>
</dbReference>
<dbReference type="CDD" id="cd19498">
    <property type="entry name" value="RecA-like_HslU"/>
    <property type="match status" value="1"/>
</dbReference>
<dbReference type="FunFam" id="3.40.50.300:FF:000213">
    <property type="entry name" value="ATP-dependent protease ATPase subunit HslU"/>
    <property type="match status" value="1"/>
</dbReference>
<dbReference type="FunFam" id="3.40.50.300:FF:000220">
    <property type="entry name" value="ATP-dependent protease ATPase subunit HslU"/>
    <property type="match status" value="1"/>
</dbReference>
<dbReference type="Gene3D" id="1.10.8.60">
    <property type="match status" value="1"/>
</dbReference>
<dbReference type="Gene3D" id="3.40.50.300">
    <property type="entry name" value="P-loop containing nucleotide triphosphate hydrolases"/>
    <property type="match status" value="2"/>
</dbReference>
<dbReference type="HAMAP" id="MF_00249">
    <property type="entry name" value="HslU"/>
    <property type="match status" value="1"/>
</dbReference>
<dbReference type="InterPro" id="IPR003593">
    <property type="entry name" value="AAA+_ATPase"/>
</dbReference>
<dbReference type="InterPro" id="IPR050052">
    <property type="entry name" value="ATP-dep_Clp_protease_ClpX"/>
</dbReference>
<dbReference type="InterPro" id="IPR003959">
    <property type="entry name" value="ATPase_AAA_core"/>
</dbReference>
<dbReference type="InterPro" id="IPR019489">
    <property type="entry name" value="Clp_ATPase_C"/>
</dbReference>
<dbReference type="InterPro" id="IPR004491">
    <property type="entry name" value="HslU"/>
</dbReference>
<dbReference type="InterPro" id="IPR027417">
    <property type="entry name" value="P-loop_NTPase"/>
</dbReference>
<dbReference type="NCBIfam" id="TIGR00390">
    <property type="entry name" value="hslU"/>
    <property type="match status" value="1"/>
</dbReference>
<dbReference type="NCBIfam" id="NF003544">
    <property type="entry name" value="PRK05201.1"/>
    <property type="match status" value="1"/>
</dbReference>
<dbReference type="PANTHER" id="PTHR48102">
    <property type="entry name" value="ATP-DEPENDENT CLP PROTEASE ATP-BINDING SUBUNIT CLPX-LIKE, MITOCHONDRIAL-RELATED"/>
    <property type="match status" value="1"/>
</dbReference>
<dbReference type="PANTHER" id="PTHR48102:SF3">
    <property type="entry name" value="ATP-DEPENDENT PROTEASE ATPASE SUBUNIT HSLU"/>
    <property type="match status" value="1"/>
</dbReference>
<dbReference type="Pfam" id="PF00004">
    <property type="entry name" value="AAA"/>
    <property type="match status" value="1"/>
</dbReference>
<dbReference type="Pfam" id="PF07724">
    <property type="entry name" value="AAA_2"/>
    <property type="match status" value="1"/>
</dbReference>
<dbReference type="SMART" id="SM00382">
    <property type="entry name" value="AAA"/>
    <property type="match status" value="1"/>
</dbReference>
<dbReference type="SMART" id="SM01086">
    <property type="entry name" value="ClpB_D2-small"/>
    <property type="match status" value="1"/>
</dbReference>
<dbReference type="SUPFAM" id="SSF52540">
    <property type="entry name" value="P-loop containing nucleoside triphosphate hydrolases"/>
    <property type="match status" value="1"/>
</dbReference>
<feature type="chain" id="PRO_1000012761" description="ATP-dependent protease ATPase subunit HslU">
    <location>
        <begin position="1"/>
        <end position="436"/>
    </location>
</feature>
<feature type="binding site" evidence="1">
    <location>
        <position position="18"/>
    </location>
    <ligand>
        <name>ATP</name>
        <dbReference type="ChEBI" id="CHEBI:30616"/>
    </ligand>
</feature>
<feature type="binding site" evidence="1">
    <location>
        <begin position="60"/>
        <end position="65"/>
    </location>
    <ligand>
        <name>ATP</name>
        <dbReference type="ChEBI" id="CHEBI:30616"/>
    </ligand>
</feature>
<feature type="binding site" evidence="1">
    <location>
        <position position="249"/>
    </location>
    <ligand>
        <name>ATP</name>
        <dbReference type="ChEBI" id="CHEBI:30616"/>
    </ligand>
</feature>
<feature type="binding site" evidence="1">
    <location>
        <position position="314"/>
    </location>
    <ligand>
        <name>ATP</name>
        <dbReference type="ChEBI" id="CHEBI:30616"/>
    </ligand>
</feature>
<feature type="binding site" evidence="1">
    <location>
        <position position="386"/>
    </location>
    <ligand>
        <name>ATP</name>
        <dbReference type="ChEBI" id="CHEBI:30616"/>
    </ligand>
</feature>
<accession>Q11CL4</accession>
<name>HSLU_CHESB</name>